<organism>
    <name type="scientific">Aspergillus awamori</name>
    <name type="common">Black koji mold</name>
    <dbReference type="NCBI Taxonomy" id="105351"/>
    <lineage>
        <taxon>Eukaryota</taxon>
        <taxon>Fungi</taxon>
        <taxon>Dikarya</taxon>
        <taxon>Ascomycota</taxon>
        <taxon>Pezizomycotina</taxon>
        <taxon>Eurotiomycetes</taxon>
        <taxon>Eurotiomycetidae</taxon>
        <taxon>Eurotiales</taxon>
        <taxon>Aspergillaceae</taxon>
        <taxon>Aspergillus</taxon>
    </lineage>
</organism>
<keyword id="KW-0002">3D-structure</keyword>
<keyword id="KW-0119">Carbohydrate metabolism</keyword>
<keyword id="KW-0903">Direct protein sequencing</keyword>
<keyword id="KW-0325">Glycoprotein</keyword>
<keyword id="KW-0326">Glycosidase</keyword>
<keyword id="KW-0378">Hydrolase</keyword>
<keyword id="KW-0624">Polysaccharide degradation</keyword>
<keyword id="KW-0964">Secreted</keyword>
<keyword id="KW-0732">Signal</keyword>
<dbReference type="EC" id="3.2.1.80" evidence="4 5 6 7"/>
<dbReference type="EMBL" id="AJ315793">
    <property type="protein sequence ID" value="CAC44220.1"/>
    <property type="molecule type" value="Genomic_DNA"/>
</dbReference>
<dbReference type="PDB" id="1Y4W">
    <property type="method" value="X-ray"/>
    <property type="resolution" value="1.55 A"/>
    <property type="chains" value="A=20-537"/>
</dbReference>
<dbReference type="PDB" id="1Y9G">
    <property type="method" value="X-ray"/>
    <property type="resolution" value="1.87 A"/>
    <property type="chains" value="A=20-537"/>
</dbReference>
<dbReference type="PDB" id="1Y9M">
    <property type="method" value="X-ray"/>
    <property type="resolution" value="1.89 A"/>
    <property type="chains" value="A=20-537"/>
</dbReference>
<dbReference type="PDBsum" id="1Y4W"/>
<dbReference type="PDBsum" id="1Y9G"/>
<dbReference type="PDBsum" id="1Y9M"/>
<dbReference type="SMR" id="Q96TU3"/>
<dbReference type="CAZy" id="GH32">
    <property type="family name" value="Glycoside Hydrolase Family 32"/>
</dbReference>
<dbReference type="GlyCosmos" id="Q96TU3">
    <property type="glycosylation" value="8 sites, No reported glycans"/>
</dbReference>
<dbReference type="iPTMnet" id="Q96TU3"/>
<dbReference type="BioCyc" id="MetaCyc:MONOMER-124333"/>
<dbReference type="BRENDA" id="3.2.1.80">
    <property type="organism ID" value="494"/>
</dbReference>
<dbReference type="EvolutionaryTrace" id="Q96TU3"/>
<dbReference type="GO" id="GO:0005737">
    <property type="term" value="C:cytoplasm"/>
    <property type="evidence" value="ECO:0007669"/>
    <property type="project" value="TreeGrafter"/>
</dbReference>
<dbReference type="GO" id="GO:0005576">
    <property type="term" value="C:extracellular region"/>
    <property type="evidence" value="ECO:0007669"/>
    <property type="project" value="UniProtKB-SubCell"/>
</dbReference>
<dbReference type="GO" id="GO:0051669">
    <property type="term" value="F:fructan beta-fructosidase activity"/>
    <property type="evidence" value="ECO:0007669"/>
    <property type="project" value="UniProtKB-EC"/>
</dbReference>
<dbReference type="GO" id="GO:0004575">
    <property type="term" value="F:sucrose alpha-glucosidase activity"/>
    <property type="evidence" value="ECO:0007669"/>
    <property type="project" value="TreeGrafter"/>
</dbReference>
<dbReference type="GO" id="GO:0000272">
    <property type="term" value="P:polysaccharide catabolic process"/>
    <property type="evidence" value="ECO:0007669"/>
    <property type="project" value="UniProtKB-KW"/>
</dbReference>
<dbReference type="GO" id="GO:0005987">
    <property type="term" value="P:sucrose catabolic process"/>
    <property type="evidence" value="ECO:0007669"/>
    <property type="project" value="TreeGrafter"/>
</dbReference>
<dbReference type="CDD" id="cd18622">
    <property type="entry name" value="GH32_Inu-like"/>
    <property type="match status" value="1"/>
</dbReference>
<dbReference type="FunFam" id="2.60.120.560:FF:000003">
    <property type="entry name" value="Extracellular exo-inulinase inuE"/>
    <property type="match status" value="1"/>
</dbReference>
<dbReference type="FunFam" id="2.115.10.20:FF:000002">
    <property type="entry name" value="Invertase 2"/>
    <property type="match status" value="1"/>
</dbReference>
<dbReference type="Gene3D" id="2.60.120.560">
    <property type="entry name" value="Exo-inulinase, domain 1"/>
    <property type="match status" value="1"/>
</dbReference>
<dbReference type="Gene3D" id="2.115.10.20">
    <property type="entry name" value="Glycosyl hydrolase domain, family 43"/>
    <property type="match status" value="1"/>
</dbReference>
<dbReference type="InterPro" id="IPR013320">
    <property type="entry name" value="ConA-like_dom_sf"/>
</dbReference>
<dbReference type="InterPro" id="IPR001362">
    <property type="entry name" value="Glyco_hydro_32"/>
</dbReference>
<dbReference type="InterPro" id="IPR018053">
    <property type="entry name" value="Glyco_hydro_32_AS"/>
</dbReference>
<dbReference type="InterPro" id="IPR013189">
    <property type="entry name" value="Glyco_hydro_32_C"/>
</dbReference>
<dbReference type="InterPro" id="IPR013148">
    <property type="entry name" value="Glyco_hydro_32_N"/>
</dbReference>
<dbReference type="InterPro" id="IPR023296">
    <property type="entry name" value="Glyco_hydro_beta-prop_sf"/>
</dbReference>
<dbReference type="PANTHER" id="PTHR42800">
    <property type="entry name" value="EXOINULINASE INUD (AFU_ORTHOLOGUE AFUA_5G00480)"/>
    <property type="match status" value="1"/>
</dbReference>
<dbReference type="PANTHER" id="PTHR42800:SF1">
    <property type="entry name" value="EXOINULINASE INUD (AFU_ORTHOLOGUE AFUA_5G00480)"/>
    <property type="match status" value="1"/>
</dbReference>
<dbReference type="Pfam" id="PF08244">
    <property type="entry name" value="Glyco_hydro_32C"/>
    <property type="match status" value="1"/>
</dbReference>
<dbReference type="Pfam" id="PF00251">
    <property type="entry name" value="Glyco_hydro_32N"/>
    <property type="match status" value="1"/>
</dbReference>
<dbReference type="SMART" id="SM00640">
    <property type="entry name" value="Glyco_32"/>
    <property type="match status" value="1"/>
</dbReference>
<dbReference type="SUPFAM" id="SSF75005">
    <property type="entry name" value="Arabinanase/levansucrase/invertase"/>
    <property type="match status" value="1"/>
</dbReference>
<dbReference type="SUPFAM" id="SSF49899">
    <property type="entry name" value="Concanavalin A-like lectins/glucanases"/>
    <property type="match status" value="1"/>
</dbReference>
<dbReference type="PROSITE" id="PS00609">
    <property type="entry name" value="GLYCOSYL_HYDROL_F32"/>
    <property type="match status" value="1"/>
</dbReference>
<evidence type="ECO:0000255" key="1"/>
<evidence type="ECO:0000255" key="2">
    <source>
        <dbReference type="PROSITE-ProRule" id="PRU10067"/>
    </source>
</evidence>
<evidence type="ECO:0000269" key="3">
    <source>
    </source>
</evidence>
<evidence type="ECO:0000269" key="4">
    <source>
    </source>
</evidence>
<evidence type="ECO:0000269" key="5">
    <source>
    </source>
</evidence>
<evidence type="ECO:0000269" key="6">
    <source>
    </source>
</evidence>
<evidence type="ECO:0000269" key="7">
    <source>
    </source>
</evidence>
<evidence type="ECO:0000303" key="8">
    <source>
    </source>
</evidence>
<evidence type="ECO:0000303" key="9">
    <source>
    </source>
</evidence>
<evidence type="ECO:0000305" key="10"/>
<evidence type="ECO:0007744" key="11">
    <source>
        <dbReference type="PDB" id="1Y4W"/>
    </source>
</evidence>
<evidence type="ECO:0007744" key="12">
    <source>
        <dbReference type="PDB" id="1Y9G"/>
    </source>
</evidence>
<evidence type="ECO:0007744" key="13">
    <source>
        <dbReference type="PDB" id="1Y9M"/>
    </source>
</evidence>
<evidence type="ECO:0007829" key="14">
    <source>
        <dbReference type="PDB" id="1Y4W"/>
    </source>
</evidence>
<evidence type="ECO:0007829" key="15">
    <source>
        <dbReference type="PDB" id="1Y9G"/>
    </source>
</evidence>
<reference key="1">
    <citation type="journal article" date="2002" name="Biochem. J.">
        <title>Purification, characterization, gene cloning and preliminary X-ray data of the exo-inulinase from Aspergillus awamori.</title>
        <authorList>
            <person name="Arand M."/>
            <person name="Golubev A.M."/>
            <person name="Neto J.R."/>
            <person name="Polikarpov I."/>
            <person name="Wattiez R."/>
            <person name="Korneeva O.S."/>
            <person name="Eneyskaya E.V."/>
            <person name="Kulminskaya A.A."/>
            <person name="Shabalin K.A."/>
            <person name="Shishliannikov S.M."/>
            <person name="Chepurnaya O.V."/>
            <person name="Neustroev K.N."/>
        </authorList>
    </citation>
    <scope>NUCLEOTIDE SEQUENCE [GENOMIC DNA]</scope>
    <scope>PROTEIN SEQUENCE OF 20-59 AND 128-139</scope>
    <scope>SUBCELLULAR LOCATION</scope>
    <scope>FUNCTION</scope>
    <scope>CATALYTIC ACTIVITY</scope>
    <scope>BIOPHYSICOCHEMICAL PROPERTIES</scope>
</reference>
<reference key="2">
    <citation type="journal article" date="2003" name="Biochim. Biophys. Acta">
        <title>Biochemical characterization of Aspergillus awamori exoinulinase: substrate binding characteristics and regioselectivity of hydrolysis.</title>
        <authorList>
            <person name="Kulminskaya A.A."/>
            <person name="Arand M."/>
            <person name="Eneyskaya E.V."/>
            <person name="Ivanen D.R."/>
            <person name="Shabalin K.A."/>
            <person name="Shishlyannikov S.M."/>
            <person name="Saveliev A.N."/>
            <person name="Korneeva O.S."/>
            <person name="Neustroev K.N."/>
        </authorList>
    </citation>
    <scope>FUNCTION</scope>
    <scope>CATALYTIC ACTIVITY</scope>
    <scope>BIOPHYSICOCHEMICAL PROPERTIES</scope>
</reference>
<reference key="3">
    <citation type="journal article" date="2023" name="J. Mol. Graph. Model.">
        <title>Single substitution in alpha-helix of active center enhanced thermostability of Aspergillus awamori exo-inulinase.</title>
        <authorList>
            <person name="Dotsenko A."/>
            <person name="Denisenko J."/>
            <person name="Zorov I."/>
            <person name="Wasserman L."/>
            <person name="Semenova M."/>
            <person name="Korolev A."/>
            <person name="Rozhkova A."/>
            <person name="Sinitsyn A."/>
        </authorList>
    </citation>
    <scope>FUNCTION</scope>
    <scope>CATALYTIC ACTIVITY</scope>
    <scope>BIOPHYSICOCHEMICAL PROPERTIES</scope>
    <scope>MUTAGENESIS OF GLY-338</scope>
    <scope>BIOTECHNOLOGY</scope>
</reference>
<reference key="4">
    <citation type="journal article" date="2025" name="Protein Expr. Purif.">
        <title>N-linked glycosylation affects catalytic parameters and fluctuation of the active center of Aspergillus awamori exo-inulinase.</title>
        <authorList>
            <person name="Dotsenko A."/>
            <person name="Denisenko Y."/>
            <person name="Zorov I."/>
            <person name="Rozhkova A."/>
            <person name="Shashkov I."/>
        </authorList>
    </citation>
    <scope>GLYCOSYLATION AT ASN-67; ASN-111; ASN-254; ASN-398 AND ASN-430</scope>
    <scope>FUNCTION</scope>
    <scope>CATALYTIC ACTIVITY</scope>
    <scope>BIOPHYSICOCHEMICAL PROPERTIES</scope>
</reference>
<reference key="5">
    <citation type="journal article" date="2004" name="J. Mol. Biol.">
        <title>Crystal structure of exo-inulinase from Aspergillus awamori: the enzyme fold and structural determinants of substrate recognition.</title>
        <authorList>
            <person name="Nagem R.A."/>
            <person name="Rojas A.L."/>
            <person name="Golubev A.M."/>
            <person name="Korneeva O.S."/>
            <person name="Eneyskaya E.V."/>
            <person name="Kulminskaya A.A."/>
            <person name="Neustroev K.N."/>
            <person name="Polikarpov I."/>
        </authorList>
    </citation>
    <scope>X-RAY CRYSTALLOGRAPHY (1.55 ANGSTROMS) OF 20-537 IN COMPLEX WITH FRUCTOSE</scope>
    <scope>ACTIVE SITE</scope>
    <scope>GLYCOSYLATION AT ASN-67; ASN-111; ASN-300; ASN-398 AND ASN-430</scope>
</reference>
<proteinExistence type="evidence at protein level"/>
<accession>Q96TU3</accession>
<name>INU1_ASPAW</name>
<gene>
    <name evidence="9" type="primary">inu1</name>
</gene>
<protein>
    <recommendedName>
        <fullName evidence="8">Extracellular exo-inulinase</fullName>
        <ecNumber evidence="4 5 6 7">3.2.1.80</ecNumber>
    </recommendedName>
</protein>
<sequence>MAPLSKALSVFMLMGITYAFNYDQPYRGQYHFSPQKNWMNDPNGLLYHNGTYHLFFQYNPGGIEWGNISWGHAISEDLTHWEEKPVALLARGFGSDVTEMYFSGSAVADVNNTSGFGKDGKTPLVAMYTSYYPVAQTLPSGQTVQEDQQSQSIAYSLDDGLTWTTYDAANPVIPNPPSPYEAEYQNFRDPFVFWHDESQKWVVVTSIAELHKLAIYTSDNLKDWKLVSEFGPYNAQGGVWECPGLVKLPLDSGNSTKWVITSGLNPGGPPGTVGSGTQYFVGEFDGTTFTPDADTVYPGNSTANWMDWGPDFYAAAGYNGLSLNDHVHIGWMNNWQYGANIPTYPWRSAMAIPRHMALKTIGSKATLVQQPQEAWSSISNKRPIYSRTFKTLSEGSTNTTTTGETFKVDLSFSAKSKASTFAIALRASANFTEQTLVGYDFAKQQIFLDRTHSGDVSFDETFASVYHGPLTPDSTGVVKLSIFVDRSSVEVFGGQGETTLTAQIFPSSDAVHARLASTGGTTEDVRADIYKIASTWN</sequence>
<comment type="function">
    <text evidence="3 4 6 7">Exo-inulinase involved in utilization of the plant storage polymer inulin, consisting of fructooligosaccharides with a degree of polymerization (DP) value from 2 to 60 (PubMed:11829749, PubMed:12922166, PubMed:36473387, PubMed:39357631). Splits off terminal fructose units successively from the non-reducing end of the inulin molecule, and also hydrolyzes levan, stachyose and raffinose (PubMed:11829749, PubMed:12922166, PubMed:39357631). Hydrolyzes both beta-2,1- as well as beta-2,6-fructosyl linkages in fructooligosaccharides (PubMed:12922166).</text>
</comment>
<comment type="catalytic activity">
    <reaction evidence="4 5 7">
        <text>Hydrolysis of terminal, non-reducing (2-&gt;1)- and (2-&gt;6)-linked beta-D-fructofuranose residues in fructans.</text>
        <dbReference type="EC" id="3.2.1.80"/>
    </reaction>
</comment>
<comment type="biophysicochemical properties">
    <kinetics>
        <KM evidence="3">0.003 mM for inulin (from Merck)</KM>
        <KM evidence="6">4 mM for inulin (from chicory)</KM>
        <KM evidence="3 7">10.1 mM for stachyose</KM>
        <KM evidence="3 7">8 mM for raffinose</KM>
        <KM evidence="4">3.72 mM for inulobiose</KM>
        <KM evidence="4">1.63 mM for inulotriose</KM>
        <KM evidence="4">0.94 mM for inulotetraose</KM>
        <KM evidence="4">1.08 mM for inulopentaose</KM>
        <KM evidence="4">1.02 mM for inulohexaose</KM>
        <KM evidence="4">1.1 mM for inuloheptaose</KM>
        <KM evidence="4">0.21 mM for levanotriose</KM>
        <KM evidence="4">2.74 mM for levanotetraose</KM>
        <KM evidence="4">10.2 mM for levanopentaose</KM>
        <KM evidence="4">1.01 mM for levanohexaose</KM>
        <KM evidence="6 7">40 mM for sucrose</KM>
        <Vmax evidence="3">175.0 umol/min/mg enzyme toward inulin</Vmax>
        <Vmax evidence="3">1.2 umol/min/mg enzyme toward levan</Vmax>
        <Vmax evidence="3">80.0 umol/min/mg enzyme toward stachyose</Vmax>
        <Vmax evidence="3">120.0 umol/min/mg enzyme toward raffinose</Vmax>
    </kinetics>
    <phDependence>
        <text evidence="7">Optimum pH is 4.5.</text>
    </phDependence>
    <temperatureDependence>
        <text evidence="7">Optimum temperature is 60 degrees Celsius.</text>
    </temperatureDependence>
</comment>
<comment type="subcellular location">
    <subcellularLocation>
        <location evidence="3">Secreted</location>
    </subcellularLocation>
</comment>
<comment type="biotechnology">
    <text evidence="6">Two major applications of exo-inulinases in industry can be improved with the increase in thermostability by the G388A mutation, namely the production of high-fructose syrup from inulin-containing plants and feed additives.</text>
</comment>
<comment type="similarity">
    <text evidence="10">Belongs to the glycosyl hydrolase 32 family.</text>
</comment>
<feature type="signal peptide" evidence="3">
    <location>
        <begin position="1"/>
        <end position="19"/>
    </location>
</feature>
<feature type="chain" id="PRO_5000067603" description="Extracellular exo-inulinase">
    <location>
        <begin position="20"/>
        <end position="537"/>
    </location>
</feature>
<feature type="active site" description="Nucleophile" evidence="2">
    <location>
        <position position="41"/>
    </location>
</feature>
<feature type="active site" description="Proton donor/acceptor" evidence="2">
    <location>
        <position position="241"/>
    </location>
</feature>
<feature type="binding site" evidence="5 12">
    <location>
        <position position="40"/>
    </location>
    <ligand>
        <name>beta-D-fructose</name>
        <dbReference type="ChEBI" id="CHEBI:28645"/>
    </ligand>
</feature>
<feature type="binding site" evidence="5 12">
    <location>
        <position position="41"/>
    </location>
    <ligand>
        <name>beta-D-fructose</name>
        <dbReference type="ChEBI" id="CHEBI:28645"/>
    </ligand>
</feature>
<feature type="binding site" evidence="5 12">
    <location>
        <position position="57"/>
    </location>
    <ligand>
        <name>beta-D-fructose</name>
        <dbReference type="ChEBI" id="CHEBI:28645"/>
    </ligand>
</feature>
<feature type="binding site" evidence="5 12">
    <location>
        <position position="65"/>
    </location>
    <ligand>
        <name>beta-D-fructose</name>
        <dbReference type="ChEBI" id="CHEBI:28645"/>
    </ligand>
</feature>
<feature type="binding site" evidence="5 12">
    <location>
        <position position="103"/>
    </location>
    <ligand>
        <name>beta-D-fructose</name>
        <dbReference type="ChEBI" id="CHEBI:28645"/>
    </ligand>
</feature>
<feature type="binding site" evidence="5 12">
    <location>
        <position position="188"/>
    </location>
    <ligand>
        <name>beta-D-fructose</name>
        <dbReference type="ChEBI" id="CHEBI:28645"/>
    </ligand>
</feature>
<feature type="binding site" evidence="5 12">
    <location>
        <position position="189"/>
    </location>
    <ligand>
        <name>beta-D-fructose</name>
        <dbReference type="ChEBI" id="CHEBI:28645"/>
    </ligand>
</feature>
<feature type="binding site" evidence="5 12">
    <location>
        <position position="241"/>
    </location>
    <ligand>
        <name>beta-D-fructose</name>
        <dbReference type="ChEBI" id="CHEBI:28645"/>
    </ligand>
</feature>
<feature type="binding site" evidence="5 12">
    <location>
        <position position="335"/>
    </location>
    <ligand>
        <name>beta-D-fructose</name>
        <dbReference type="ChEBI" id="CHEBI:28645"/>
    </ligand>
</feature>
<feature type="glycosylation site" description="N-linked (GlcNAc...) asparagine" evidence="1">
    <location>
        <position position="49"/>
    </location>
</feature>
<feature type="glycosylation site" description="N-linked (GlcNAc...) asparagine" evidence="7">
    <location>
        <position position="67"/>
    </location>
</feature>
<feature type="glycosylation site" description="N-linked (GlcNAc...) asparagine" evidence="5 7 11 12">
    <location>
        <position position="111"/>
    </location>
</feature>
<feature type="glycosylation site" description="N-linked (GlcNAc...) asparagine" evidence="1">
    <location>
        <position position="112"/>
    </location>
</feature>
<feature type="glycosylation site" description="N-linked (GlcNAc...) asparagine" evidence="1 7">
    <location>
        <position position="254"/>
    </location>
</feature>
<feature type="glycosylation site" description="N-linked (GlcNAc...) asparagine" evidence="5 13">
    <location>
        <position position="300"/>
    </location>
</feature>
<feature type="glycosylation site" description="N-linked (GlcNAc...) asparagine" evidence="5 7 11 12 13">
    <location>
        <position position="398"/>
    </location>
</feature>
<feature type="glycosylation site" description="N-linked (GlcNAc...) asparagine" evidence="5 7 11 12 13">
    <location>
        <position position="430"/>
    </location>
</feature>
<feature type="mutagenesis site" description="Improves the enzyme thermostability while maintaining the specific activity." evidence="6">
    <original>G</original>
    <variation>A</variation>
    <location>
        <position position="338"/>
    </location>
</feature>
<feature type="strand" evidence="14">
    <location>
        <begin position="29"/>
        <end position="31"/>
    </location>
</feature>
<feature type="strand" evidence="14">
    <location>
        <begin position="35"/>
        <end position="48"/>
    </location>
</feature>
<feature type="strand" evidence="14">
    <location>
        <begin position="51"/>
        <end position="58"/>
    </location>
</feature>
<feature type="strand" evidence="14">
    <location>
        <begin position="63"/>
        <end position="65"/>
    </location>
</feature>
<feature type="strand" evidence="14">
    <location>
        <begin position="69"/>
        <end position="80"/>
    </location>
</feature>
<feature type="strand" evidence="14">
    <location>
        <begin position="82"/>
        <end position="88"/>
    </location>
</feature>
<feature type="turn" evidence="14">
    <location>
        <begin position="92"/>
        <end position="94"/>
    </location>
</feature>
<feature type="strand" evidence="14">
    <location>
        <begin position="99"/>
        <end position="108"/>
    </location>
</feature>
<feature type="strand" evidence="15">
    <location>
        <begin position="113"/>
        <end position="115"/>
    </location>
</feature>
<feature type="strand" evidence="14">
    <location>
        <begin position="119"/>
        <end position="121"/>
    </location>
</feature>
<feature type="strand" evidence="14">
    <location>
        <begin position="124"/>
        <end position="134"/>
    </location>
</feature>
<feature type="strand" evidence="14">
    <location>
        <begin position="148"/>
        <end position="158"/>
    </location>
</feature>
<feature type="turn" evidence="14">
    <location>
        <begin position="167"/>
        <end position="169"/>
    </location>
</feature>
<feature type="helix" evidence="14">
    <location>
        <begin position="181"/>
        <end position="183"/>
    </location>
</feature>
<feature type="strand" evidence="14">
    <location>
        <begin position="186"/>
        <end position="195"/>
    </location>
</feature>
<feature type="turn" evidence="14">
    <location>
        <begin position="196"/>
        <end position="199"/>
    </location>
</feature>
<feature type="strand" evidence="14">
    <location>
        <begin position="200"/>
        <end position="207"/>
    </location>
</feature>
<feature type="helix" evidence="14">
    <location>
        <begin position="208"/>
        <end position="210"/>
    </location>
</feature>
<feature type="strand" evidence="14">
    <location>
        <begin position="212"/>
        <end position="223"/>
    </location>
</feature>
<feature type="strand" evidence="14">
    <location>
        <begin position="225"/>
        <end position="230"/>
    </location>
</feature>
<feature type="strand" evidence="14">
    <location>
        <begin position="237"/>
        <end position="250"/>
    </location>
</feature>
<feature type="turn" evidence="15">
    <location>
        <begin position="251"/>
        <end position="254"/>
    </location>
</feature>
<feature type="strand" evidence="14">
    <location>
        <begin position="256"/>
        <end position="266"/>
    </location>
</feature>
<feature type="strand" evidence="14">
    <location>
        <begin position="276"/>
        <end position="284"/>
    </location>
</feature>
<feature type="strand" evidence="14">
    <location>
        <begin position="289"/>
        <end position="291"/>
    </location>
</feature>
<feature type="turn" evidence="14">
    <location>
        <begin position="293"/>
        <end position="295"/>
    </location>
</feature>
<feature type="strand" evidence="14">
    <location>
        <begin position="298"/>
        <end position="301"/>
    </location>
</feature>
<feature type="strand" evidence="14">
    <location>
        <begin position="304"/>
        <end position="306"/>
    </location>
</feature>
<feature type="strand" evidence="14">
    <location>
        <begin position="308"/>
        <end position="311"/>
    </location>
</feature>
<feature type="strand" evidence="14">
    <location>
        <begin position="313"/>
        <end position="317"/>
    </location>
</feature>
<feature type="helix" evidence="14">
    <location>
        <begin position="323"/>
        <end position="325"/>
    </location>
</feature>
<feature type="strand" evidence="14">
    <location>
        <begin position="327"/>
        <end position="331"/>
    </location>
</feature>
<feature type="turn" evidence="14">
    <location>
        <begin position="335"/>
        <end position="337"/>
    </location>
</feature>
<feature type="helix" evidence="14">
    <location>
        <begin position="338"/>
        <end position="340"/>
    </location>
</feature>
<feature type="strand" evidence="14">
    <location>
        <begin position="344"/>
        <end position="347"/>
    </location>
</feature>
<feature type="strand" evidence="14">
    <location>
        <begin position="354"/>
        <end position="361"/>
    </location>
</feature>
<feature type="strand" evidence="14">
    <location>
        <begin position="364"/>
        <end position="371"/>
    </location>
</feature>
<feature type="helix" evidence="14">
    <location>
        <begin position="375"/>
        <end position="377"/>
    </location>
</feature>
<feature type="strand" evidence="14">
    <location>
        <begin position="384"/>
        <end position="392"/>
    </location>
</feature>
<feature type="strand" evidence="14">
    <location>
        <begin position="394"/>
        <end position="396"/>
    </location>
</feature>
<feature type="strand" evidence="14">
    <location>
        <begin position="404"/>
        <end position="413"/>
    </location>
</feature>
<feature type="strand" evidence="14">
    <location>
        <begin position="417"/>
        <end position="427"/>
    </location>
</feature>
<feature type="strand" evidence="14">
    <location>
        <begin position="431"/>
        <end position="433"/>
    </location>
</feature>
<feature type="strand" evidence="14">
    <location>
        <begin position="435"/>
        <end position="440"/>
    </location>
</feature>
<feature type="turn" evidence="14">
    <location>
        <begin position="441"/>
        <end position="444"/>
    </location>
</feature>
<feature type="strand" evidence="14">
    <location>
        <begin position="445"/>
        <end position="449"/>
    </location>
</feature>
<feature type="turn" evidence="14">
    <location>
        <begin position="460"/>
        <end position="462"/>
    </location>
</feature>
<feature type="strand" evidence="14">
    <location>
        <begin position="465"/>
        <end position="469"/>
    </location>
</feature>
<feature type="strand" evidence="14">
    <location>
        <begin position="476"/>
        <end position="485"/>
    </location>
</feature>
<feature type="strand" evidence="14">
    <location>
        <begin position="488"/>
        <end position="493"/>
    </location>
</feature>
<feature type="turn" evidence="14">
    <location>
        <begin position="494"/>
        <end position="497"/>
    </location>
</feature>
<feature type="strand" evidence="14">
    <location>
        <begin position="498"/>
        <end position="503"/>
    </location>
</feature>
<feature type="strand" evidence="14">
    <location>
        <begin position="512"/>
        <end position="520"/>
    </location>
</feature>
<feature type="strand" evidence="14">
    <location>
        <begin position="522"/>
        <end position="532"/>
    </location>
</feature>